<reference key="1">
    <citation type="journal article" date="1998" name="Biochim. Biophys. Acta">
        <title>Molecular cloning and functional expression of chicken luteinizing hormone receptor.</title>
        <authorList>
            <person name="Mizutani T."/>
            <person name="Minegishi T."/>
            <person name="Nonobe Y."/>
            <person name="Abe Y."/>
            <person name="Hasegawa Y."/>
            <person name="Wakabayashi K."/>
            <person name="Kamiyoshi M."/>
            <person name="Miyamoto K."/>
        </authorList>
    </citation>
    <scope>NUCLEOTIDE SEQUENCE [MRNA] (ISOFORMS 1 AND 2)</scope>
    <scope>FUNCTION</scope>
    <scope>SUBCELLULAR LOCATION</scope>
    <scope>TISSUE SPECIFICITY</scope>
    <source>
        <tissue evidence="7">Ovary</tissue>
    </source>
</reference>
<reference key="2">
    <citation type="journal article" date="2004" name="Nature">
        <title>Sequence and comparative analysis of the chicken genome provide unique perspectives on vertebrate evolution.</title>
        <authorList>
            <person name="Hillier L.W."/>
            <person name="Miller W."/>
            <person name="Birney E."/>
            <person name="Warren W."/>
            <person name="Hardison R.C."/>
            <person name="Ponting C.P."/>
            <person name="Bork P."/>
            <person name="Burt D.W."/>
            <person name="Groenen M.A.M."/>
            <person name="Delany M.E."/>
            <person name="Dodgson J.B."/>
            <person name="Chinwalla A.T."/>
            <person name="Cliften P.F."/>
            <person name="Clifton S.W."/>
            <person name="Delehaunty K.D."/>
            <person name="Fronick C."/>
            <person name="Fulton R.S."/>
            <person name="Graves T.A."/>
            <person name="Kremitzki C."/>
            <person name="Layman D."/>
            <person name="Magrini V."/>
            <person name="McPherson J.D."/>
            <person name="Miner T.L."/>
            <person name="Minx P."/>
            <person name="Nash W.E."/>
            <person name="Nhan M.N."/>
            <person name="Nelson J.O."/>
            <person name="Oddy L.G."/>
            <person name="Pohl C.S."/>
            <person name="Randall-Maher J."/>
            <person name="Smith S.M."/>
            <person name="Wallis J.W."/>
            <person name="Yang S.-P."/>
            <person name="Romanov M.N."/>
            <person name="Rondelli C.M."/>
            <person name="Paton B."/>
            <person name="Smith J."/>
            <person name="Morrice D."/>
            <person name="Daniels L."/>
            <person name="Tempest H.G."/>
            <person name="Robertson L."/>
            <person name="Masabanda J.S."/>
            <person name="Griffin D.K."/>
            <person name="Vignal A."/>
            <person name="Fillon V."/>
            <person name="Jacobbson L."/>
            <person name="Kerje S."/>
            <person name="Andersson L."/>
            <person name="Crooijmans R.P."/>
            <person name="Aerts J."/>
            <person name="van der Poel J.J."/>
            <person name="Ellegren H."/>
            <person name="Caldwell R.B."/>
            <person name="Hubbard S.J."/>
            <person name="Grafham D.V."/>
            <person name="Kierzek A.M."/>
            <person name="McLaren S.R."/>
            <person name="Overton I.M."/>
            <person name="Arakawa H."/>
            <person name="Beattie K.J."/>
            <person name="Bezzubov Y."/>
            <person name="Boardman P.E."/>
            <person name="Bonfield J.K."/>
            <person name="Croning M.D.R."/>
            <person name="Davies R.M."/>
            <person name="Francis M.D."/>
            <person name="Humphray S.J."/>
            <person name="Scott C.E."/>
            <person name="Taylor R.G."/>
            <person name="Tickle C."/>
            <person name="Brown W.R.A."/>
            <person name="Rogers J."/>
            <person name="Buerstedde J.-M."/>
            <person name="Wilson S.A."/>
            <person name="Stubbs L."/>
            <person name="Ovcharenko I."/>
            <person name="Gordon L."/>
            <person name="Lucas S."/>
            <person name="Miller M.M."/>
            <person name="Inoko H."/>
            <person name="Shiina T."/>
            <person name="Kaufman J."/>
            <person name="Salomonsen J."/>
            <person name="Skjoedt K."/>
            <person name="Wong G.K.-S."/>
            <person name="Wang J."/>
            <person name="Liu B."/>
            <person name="Wang J."/>
            <person name="Yu J."/>
            <person name="Yang H."/>
            <person name="Nefedov M."/>
            <person name="Koriabine M."/>
            <person name="Dejong P.J."/>
            <person name="Goodstadt L."/>
            <person name="Webber C."/>
            <person name="Dickens N.J."/>
            <person name="Letunic I."/>
            <person name="Suyama M."/>
            <person name="Torrents D."/>
            <person name="von Mering C."/>
            <person name="Zdobnov E.M."/>
            <person name="Makova K."/>
            <person name="Nekrutenko A."/>
            <person name="Elnitski L."/>
            <person name="Eswara P."/>
            <person name="King D.C."/>
            <person name="Yang S.-P."/>
            <person name="Tyekucheva S."/>
            <person name="Radakrishnan A."/>
            <person name="Harris R.S."/>
            <person name="Chiaromonte F."/>
            <person name="Taylor J."/>
            <person name="He J."/>
            <person name="Rijnkels M."/>
            <person name="Griffiths-Jones S."/>
            <person name="Ureta-Vidal A."/>
            <person name="Hoffman M.M."/>
            <person name="Severin J."/>
            <person name="Searle S.M.J."/>
            <person name="Law A.S."/>
            <person name="Speed D."/>
            <person name="Waddington D."/>
            <person name="Cheng Z."/>
            <person name="Tuzun E."/>
            <person name="Eichler E."/>
            <person name="Bao Z."/>
            <person name="Flicek P."/>
            <person name="Shteynberg D.D."/>
            <person name="Brent M.R."/>
            <person name="Bye J.M."/>
            <person name="Huckle E.J."/>
            <person name="Chatterji S."/>
            <person name="Dewey C."/>
            <person name="Pachter L."/>
            <person name="Kouranov A."/>
            <person name="Mourelatos Z."/>
            <person name="Hatzigeorgiou A.G."/>
            <person name="Paterson A.H."/>
            <person name="Ivarie R."/>
            <person name="Brandstrom M."/>
            <person name="Axelsson E."/>
            <person name="Backstrom N."/>
            <person name="Berlin S."/>
            <person name="Webster M.T."/>
            <person name="Pourquie O."/>
            <person name="Reymond A."/>
            <person name="Ucla C."/>
            <person name="Antonarakis S.E."/>
            <person name="Long M."/>
            <person name="Emerson J.J."/>
            <person name="Betran E."/>
            <person name="Dupanloup I."/>
            <person name="Kaessmann H."/>
            <person name="Hinrichs A.S."/>
            <person name="Bejerano G."/>
            <person name="Furey T.S."/>
            <person name="Harte R.A."/>
            <person name="Raney B."/>
            <person name="Siepel A."/>
            <person name="Kent W.J."/>
            <person name="Haussler D."/>
            <person name="Eyras E."/>
            <person name="Castelo R."/>
            <person name="Abril J.F."/>
            <person name="Castellano S."/>
            <person name="Camara F."/>
            <person name="Parra G."/>
            <person name="Guigo R."/>
            <person name="Bourque G."/>
            <person name="Tesler G."/>
            <person name="Pevzner P.A."/>
            <person name="Smit A."/>
            <person name="Fulton L.A."/>
            <person name="Mardis E.R."/>
            <person name="Wilson R.K."/>
        </authorList>
    </citation>
    <scope>NUCLEOTIDE SEQUENCE [LARGE SCALE GENOMIC DNA]</scope>
    <source>
        <strain>Red jungle fowl</strain>
    </source>
</reference>
<reference key="3">
    <citation type="journal article" date="1996" name="Biol. Reprod.">
        <title>Characterization of a chicken luteinizing hormone receptor (cLH-R) complementary deoxyribonucleic acid, and expression of cLH-R messenger ribonucleic acid in the ovary.</title>
        <authorList>
            <person name="Johnson A.L."/>
            <person name="Bridgham J.T."/>
            <person name="Wagner B."/>
        </authorList>
    </citation>
    <scope>NUCLEOTIDE SEQUENCE [MRNA] OF 363-728</scope>
    <scope>TISSUE SPECIFICITY</scope>
    <scope>DEVELOPMENTAL STAGE</scope>
    <source>
        <strain evidence="6">White leghorn</strain>
        <tissue evidence="6">Ovary</tissue>
    </source>
</reference>
<dbReference type="EMBL" id="AB009283">
    <property type="protein sequence ID" value="BAA23736.1"/>
    <property type="molecule type" value="mRNA"/>
</dbReference>
<dbReference type="EMBL" id="AADN03003068">
    <property type="status" value="NOT_ANNOTATED_CDS"/>
    <property type="molecule type" value="Genomic_DNA"/>
</dbReference>
<dbReference type="EMBL" id="U31987">
    <property type="protein sequence ID" value="AAC59907.1"/>
    <property type="molecule type" value="mRNA"/>
</dbReference>
<dbReference type="RefSeq" id="NP_990267.1">
    <molecule id="Q90674-1"/>
    <property type="nucleotide sequence ID" value="NM_204936.2"/>
</dbReference>
<dbReference type="SMR" id="Q90674"/>
<dbReference type="FunCoup" id="Q90674">
    <property type="interactions" value="18"/>
</dbReference>
<dbReference type="STRING" id="9031.ENSGALP00000014790"/>
<dbReference type="PaxDb" id="9031-ENSGALP00000014790"/>
<dbReference type="Ensembl" id="ENSGALT00010041727.1">
    <molecule id="Q90674-1"/>
    <property type="protein sequence ID" value="ENSGALP00010024405.1"/>
    <property type="gene ID" value="ENSGALG00010017301.1"/>
</dbReference>
<dbReference type="GeneID" id="395776"/>
<dbReference type="KEGG" id="gga:395776"/>
<dbReference type="CTD" id="3973"/>
<dbReference type="VEuPathDB" id="HostDB:geneid_395776"/>
<dbReference type="eggNOG" id="KOG2087">
    <property type="taxonomic scope" value="Eukaryota"/>
</dbReference>
<dbReference type="GeneTree" id="ENSGT00940000157364"/>
<dbReference type="InParanoid" id="Q90674"/>
<dbReference type="OMA" id="ECESTMR"/>
<dbReference type="OrthoDB" id="5981530at2759"/>
<dbReference type="PhylomeDB" id="Q90674"/>
<dbReference type="TreeFam" id="TF316814"/>
<dbReference type="PRO" id="PR:Q90674"/>
<dbReference type="Proteomes" id="UP000000539">
    <property type="component" value="Chromosome 3"/>
</dbReference>
<dbReference type="GO" id="GO:0034451">
    <property type="term" value="C:centriolar satellite"/>
    <property type="evidence" value="ECO:0007669"/>
    <property type="project" value="Ensembl"/>
</dbReference>
<dbReference type="GO" id="GO:0005886">
    <property type="term" value="C:plasma membrane"/>
    <property type="evidence" value="ECO:0000250"/>
    <property type="project" value="UniProtKB"/>
</dbReference>
<dbReference type="GO" id="GO:0038106">
    <property type="term" value="F:choriogonadotropin hormone binding"/>
    <property type="evidence" value="ECO:0007669"/>
    <property type="project" value="Ensembl"/>
</dbReference>
<dbReference type="GO" id="GO:0035472">
    <property type="term" value="F:choriogonadotropin hormone receptor activity"/>
    <property type="evidence" value="ECO:0007669"/>
    <property type="project" value="Ensembl"/>
</dbReference>
<dbReference type="GO" id="GO:0008528">
    <property type="term" value="F:G protein-coupled peptide receptor activity"/>
    <property type="evidence" value="ECO:0000318"/>
    <property type="project" value="GO_Central"/>
</dbReference>
<dbReference type="GO" id="GO:0004964">
    <property type="term" value="F:luteinizing hormone receptor activity"/>
    <property type="evidence" value="ECO:0000314"/>
    <property type="project" value="UniProtKB"/>
</dbReference>
<dbReference type="GO" id="GO:0007189">
    <property type="term" value="P:adenylate cyclase-activating G protein-coupled receptor signaling pathway"/>
    <property type="evidence" value="ECO:0000314"/>
    <property type="project" value="UniProtKB"/>
</dbReference>
<dbReference type="GO" id="GO:0071373">
    <property type="term" value="P:cellular response to luteinizing hormone stimulus"/>
    <property type="evidence" value="ECO:0000250"/>
    <property type="project" value="UniProtKB"/>
</dbReference>
<dbReference type="GO" id="GO:0050890">
    <property type="term" value="P:cognition"/>
    <property type="evidence" value="ECO:0007669"/>
    <property type="project" value="Ensembl"/>
</dbReference>
<dbReference type="GO" id="GO:0046544">
    <property type="term" value="P:development of secondary male sexual characteristics"/>
    <property type="evidence" value="ECO:0007669"/>
    <property type="project" value="Ensembl"/>
</dbReference>
<dbReference type="GO" id="GO:0009755">
    <property type="term" value="P:hormone-mediated signaling pathway"/>
    <property type="evidence" value="ECO:0000318"/>
    <property type="project" value="GO_Central"/>
</dbReference>
<dbReference type="GO" id="GO:0042700">
    <property type="term" value="P:luteinizing hormone signaling pathway"/>
    <property type="evidence" value="ECO:0000314"/>
    <property type="project" value="UniProtKB"/>
</dbReference>
<dbReference type="GO" id="GO:0008584">
    <property type="term" value="P:male gonad development"/>
    <property type="evidence" value="ECO:0000318"/>
    <property type="project" value="GO_Central"/>
</dbReference>
<dbReference type="GO" id="GO:0001541">
    <property type="term" value="P:ovarian follicle development"/>
    <property type="evidence" value="ECO:0000318"/>
    <property type="project" value="GO_Central"/>
</dbReference>
<dbReference type="GO" id="GO:0022602">
    <property type="term" value="P:ovulation cycle process"/>
    <property type="evidence" value="ECO:0000318"/>
    <property type="project" value="GO_Central"/>
</dbReference>
<dbReference type="GO" id="GO:0007200">
    <property type="term" value="P:phospholipase C-activating G protein-coupled receptor signaling pathway"/>
    <property type="evidence" value="ECO:0000318"/>
    <property type="project" value="GO_Central"/>
</dbReference>
<dbReference type="GO" id="GO:0032962">
    <property type="term" value="P:positive regulation of inositol trisphosphate biosynthetic process"/>
    <property type="evidence" value="ECO:0007669"/>
    <property type="project" value="Ensembl"/>
</dbReference>
<dbReference type="GO" id="GO:0090030">
    <property type="term" value="P:regulation of steroid hormone biosynthetic process"/>
    <property type="evidence" value="ECO:0007669"/>
    <property type="project" value="Ensembl"/>
</dbReference>
<dbReference type="GO" id="GO:0072520">
    <property type="term" value="P:seminiferous tubule development"/>
    <property type="evidence" value="ECO:0007669"/>
    <property type="project" value="Ensembl"/>
</dbReference>
<dbReference type="GO" id="GO:0007283">
    <property type="term" value="P:spermatogenesis"/>
    <property type="evidence" value="ECO:0007669"/>
    <property type="project" value="Ensembl"/>
</dbReference>
<dbReference type="CDD" id="cd15359">
    <property type="entry name" value="7tmA_LHCGR"/>
    <property type="match status" value="1"/>
</dbReference>
<dbReference type="FunFam" id="1.20.1070.10:FF:000019">
    <property type="entry name" value="Lutropin-choriogonadotropic hormone receptor"/>
    <property type="match status" value="1"/>
</dbReference>
<dbReference type="FunFam" id="3.80.10.10:FF:000128">
    <property type="entry name" value="Lutropin-choriogonadotropic hormone receptor"/>
    <property type="match status" value="1"/>
</dbReference>
<dbReference type="Gene3D" id="1.20.1070.10">
    <property type="entry name" value="Rhodopsin 7-helix transmembrane proteins"/>
    <property type="match status" value="1"/>
</dbReference>
<dbReference type="Gene3D" id="3.80.10.10">
    <property type="entry name" value="Ribonuclease Inhibitor"/>
    <property type="match status" value="1"/>
</dbReference>
<dbReference type="InterPro" id="IPR000276">
    <property type="entry name" value="GPCR_Rhodpsn"/>
</dbReference>
<dbReference type="InterPro" id="IPR017452">
    <property type="entry name" value="GPCR_Rhodpsn_7TM"/>
</dbReference>
<dbReference type="InterPro" id="IPR002131">
    <property type="entry name" value="Gphrmn_rcpt_fam"/>
</dbReference>
<dbReference type="InterPro" id="IPR026906">
    <property type="entry name" value="LRR_5"/>
</dbReference>
<dbReference type="InterPro" id="IPR032675">
    <property type="entry name" value="LRR_dom_sf"/>
</dbReference>
<dbReference type="InterPro" id="IPR002273">
    <property type="entry name" value="LSH_rcpt"/>
</dbReference>
<dbReference type="PANTHER" id="PTHR24372">
    <property type="entry name" value="GLYCOPROTEIN HORMONE RECEPTOR"/>
    <property type="match status" value="1"/>
</dbReference>
<dbReference type="PANTHER" id="PTHR24372:SF1">
    <property type="entry name" value="LUTROPIN-CHORIOGONADOTROPIC HORMONE RECEPTOR"/>
    <property type="match status" value="1"/>
</dbReference>
<dbReference type="Pfam" id="PF00001">
    <property type="entry name" value="7tm_1"/>
    <property type="match status" value="1"/>
</dbReference>
<dbReference type="Pfam" id="PF13306">
    <property type="entry name" value="LRR_5"/>
    <property type="match status" value="2"/>
</dbReference>
<dbReference type="PRINTS" id="PR00373">
    <property type="entry name" value="GLYCHORMONER"/>
</dbReference>
<dbReference type="PRINTS" id="PR00237">
    <property type="entry name" value="GPCRRHODOPSN"/>
</dbReference>
<dbReference type="PRINTS" id="PR01144">
    <property type="entry name" value="LSHRECEPTOR"/>
</dbReference>
<dbReference type="SUPFAM" id="SSF81321">
    <property type="entry name" value="Family A G protein-coupled receptor-like"/>
    <property type="match status" value="1"/>
</dbReference>
<dbReference type="SUPFAM" id="SSF52058">
    <property type="entry name" value="L domain-like"/>
    <property type="match status" value="1"/>
</dbReference>
<dbReference type="PROSITE" id="PS00237">
    <property type="entry name" value="G_PROTEIN_RECEP_F1_1"/>
    <property type="match status" value="1"/>
</dbReference>
<dbReference type="PROSITE" id="PS50262">
    <property type="entry name" value="G_PROTEIN_RECEP_F1_2"/>
    <property type="match status" value="1"/>
</dbReference>
<keyword id="KW-0025">Alternative splicing</keyword>
<keyword id="KW-1003">Cell membrane</keyword>
<keyword id="KW-1015">Disulfide bond</keyword>
<keyword id="KW-0297">G-protein coupled receptor</keyword>
<keyword id="KW-0433">Leucine-rich repeat</keyword>
<keyword id="KW-0472">Membrane</keyword>
<keyword id="KW-0597">Phosphoprotein</keyword>
<keyword id="KW-0675">Receptor</keyword>
<keyword id="KW-1185">Reference proteome</keyword>
<keyword id="KW-0677">Repeat</keyword>
<keyword id="KW-0732">Signal</keyword>
<keyword id="KW-0807">Transducer</keyword>
<keyword id="KW-0812">Transmembrane</keyword>
<keyword id="KW-1133">Transmembrane helix</keyword>
<comment type="function">
    <text evidence="1 5 9">Receptor for lutropin-choriogonadotropic hormone. The activity of this receptor is mediated by G proteins which activate adenylate cyclase.</text>
</comment>
<comment type="subcellular location">
    <subcellularLocation>
        <location evidence="5">Cell membrane</location>
        <topology evidence="8">Multi-pass membrane protein</topology>
    </subcellularLocation>
</comment>
<comment type="alternative products">
    <event type="alternative splicing"/>
    <isoform>
        <id>Q90674-1</id>
        <name>1</name>
        <sequence type="displayed"/>
    </isoform>
    <isoform>
        <id>Q90674-2</id>
        <name>2</name>
        <sequence type="described" ref="VSP_057109"/>
    </isoform>
</comment>
<comment type="tissue specificity">
    <text evidence="4 5">Expressed in ovarian follicle granulosa cells (PubMed:8828833, PubMed:9545511). Expressed in ovarian follicle theca cells (PubMed:8828833).</text>
</comment>
<comment type="developmental stage">
    <text evidence="4">Expression levels are very low in 3-5mm, 6-8mm and 9-12mm ovarian follicles, but subsequently increase rapidly with high levels detected during F3, F2 and F1 preovulatory stages.</text>
</comment>
<comment type="miscellaneous">
    <molecule>Isoform 2</molecule>
    <text evidence="4 5">Additional isoforms seem to exist.</text>
</comment>
<comment type="similarity">
    <text evidence="3">Belongs to the G-protein coupled receptor 1 family. FSH/LSH/TSH subfamily.</text>
</comment>
<sequence length="728" mass="81092">MLPALLPLLLPALLPGAGGGRCPQRCACTQPALRCPTPPPGARPAPARASFTHLPVKVIPSHAFEGLRDAFIIEISQSDSLERIEASAFDSLPALSEILILNTKNLLHIEDGAFRNLPRLKYLSICNTGIIEFPDLTQIFSSEAHFILELCDNLRMTTIPQNAFQGMSNESLTLKLYKNGFEDIHSHAFNGTKLNQLILKDNKNLRRIHNDALRGATGPDVLDISSTALESLPSYGLEAIQVLNAMSSYSLKRLPPLDKFSSLLEAVLTYPSHCCAFQNLRTEKQNSLLSIFDNFSKQCESTMRKPASEVFYRDASSNTSLWPAEKHMYPLETGEEAFPYSYSTVFYEDEMTGFDFEYDFCQPKILTCTPEPDAFNPCEDILGYSFLRVLIWFINILALAGNFIVLLVLITSHYKLTVPRFLMCNLSFADFCMGLYLLLIASVDAQTSGQYYNHAIDWQTGSGCSTAGFFTVFASELSVYTLTVITIERWHTITYAMQLDRKLRLRHAVPIMLGGWVFSILIAVLPLLGVSSYMKVSICLPMDIETGLSQAYILLILMLNVIAFLVICACYIKIYVAVQNPELVAANKDTKIAKRMAILIFTDFTCMAPISFFAISAAIKVPLITVTNSKILLVLFYPVNSCANPFLYAIFTKAFQRDFFLLMSKLGCCKSRAELYRVNYFSAYTPNCKNGSSAPGPSKASQALLLLSASEKLCKTRRSTKKSQPECQ</sequence>
<protein>
    <recommendedName>
        <fullName evidence="1">Lutropin-choriogonadotropic hormone receptor</fullName>
        <shortName evidence="1">LH/CG-R</shortName>
    </recommendedName>
    <alternativeName>
        <fullName evidence="6">Luteinizing hormone receptor</fullName>
        <shortName evidence="1">LSH-R</shortName>
        <shortName evidence="6">cLH-R</shortName>
    </alternativeName>
</protein>
<name>LSHR_CHICK</name>
<gene>
    <name evidence="1" type="primary">LHCGR</name>
</gene>
<feature type="signal peptide" evidence="2">
    <location>
        <begin position="1"/>
        <end position="19"/>
    </location>
</feature>
<feature type="chain" id="PRO_0000069707" description="Lutropin-choriogonadotropic hormone receptor" evidence="2">
    <location>
        <begin position="20"/>
        <end position="728"/>
    </location>
</feature>
<feature type="topological domain" description="Extracellular" evidence="2">
    <location>
        <begin position="20"/>
        <end position="389"/>
    </location>
</feature>
<feature type="transmembrane region" description="Helical; Name=1" evidence="2">
    <location>
        <begin position="390"/>
        <end position="410"/>
    </location>
</feature>
<feature type="topological domain" description="Cytoplasmic" evidence="2">
    <location>
        <begin position="411"/>
        <end position="420"/>
    </location>
</feature>
<feature type="transmembrane region" description="Helical; Name=2" evidence="2">
    <location>
        <begin position="421"/>
        <end position="441"/>
    </location>
</feature>
<feature type="topological domain" description="Extracellular" evidence="2">
    <location>
        <begin position="442"/>
        <end position="466"/>
    </location>
</feature>
<feature type="transmembrane region" description="Helical; Name=3" evidence="2">
    <location>
        <begin position="467"/>
        <end position="487"/>
    </location>
</feature>
<feature type="topological domain" description="Cytoplasmic" evidence="2">
    <location>
        <begin position="488"/>
        <end position="507"/>
    </location>
</feature>
<feature type="transmembrane region" description="Helical; Name=4" evidence="2">
    <location>
        <begin position="508"/>
        <end position="528"/>
    </location>
</feature>
<feature type="topological domain" description="Extracellular" evidence="2">
    <location>
        <begin position="529"/>
        <end position="551"/>
    </location>
</feature>
<feature type="transmembrane region" description="Helical; Name=5" evidence="2">
    <location>
        <begin position="552"/>
        <end position="572"/>
    </location>
</feature>
<feature type="topological domain" description="Cytoplasmic" evidence="2">
    <location>
        <begin position="573"/>
        <end position="595"/>
    </location>
</feature>
<feature type="transmembrane region" description="Helical; Name=6" evidence="2">
    <location>
        <begin position="596"/>
        <end position="616"/>
    </location>
</feature>
<feature type="topological domain" description="Extracellular" evidence="2">
    <location>
        <begin position="617"/>
        <end position="630"/>
    </location>
</feature>
<feature type="transmembrane region" description="Helical; Name=7" evidence="2">
    <location>
        <begin position="631"/>
        <end position="651"/>
    </location>
</feature>
<feature type="topological domain" description="Cytoplasmic" evidence="2">
    <location>
        <begin position="652"/>
        <end position="728"/>
    </location>
</feature>
<feature type="repeat" description="LRR 1" evidence="2">
    <location>
        <begin position="92"/>
        <end position="116"/>
    </location>
</feature>
<feature type="repeat" description="LRR 2" evidence="2">
    <location>
        <begin position="117"/>
        <end position="142"/>
    </location>
</feature>
<feature type="repeat" description="LRR 3" evidence="2">
    <location>
        <begin position="144"/>
        <end position="166"/>
    </location>
</feature>
<feature type="repeat" description="LRR 4" evidence="2">
    <location>
        <begin position="168"/>
        <end position="191"/>
    </location>
</feature>
<feature type="repeat" description="LRR 5" evidence="2">
    <location>
        <begin position="193"/>
        <end position="215"/>
    </location>
</feature>
<feature type="repeat" description="LRR 6" evidence="2">
    <location>
        <begin position="216"/>
        <end position="239"/>
    </location>
</feature>
<feature type="disulfide bond" evidence="3">
    <location>
        <begin position="464"/>
        <end position="539"/>
    </location>
</feature>
<feature type="splice variant" id="VSP_057109" description="In isoform 2." evidence="5">
    <original>FYRDASSNTSLWPAEKHMYPLETGEEAFPYSYSTVFYEDEMTGFDFEYDFCQPKILTCTPEPDAFNPCEDILGYSFLRVLIWFINILALAGNFIVLLVLITSHYKLTVPRFLMCNLSFADFCMGLYLLLIASVDAQTSGQYYNHAIDWQTGSGCSTAGFFTVFASELSVYTLTVITIERWHTITYAMQLDRKLRLRHAVPIMLGGWVFSILIAVLPLLGVSSYMKVSICLPMDIETGLSQAYILLILMLNVIAFLVICACYIKIYVAVQNPELVAANKDTKIAKRMAILIFTDFTCMAPISFFAISAAIKVPLITVTNSKILLVLFYPVNSCANPFLYAIFTKAFQRDFFLLMSKLGCCKSRAELYRVNYFSAYTPNCKNGSSAPGPSKASQALLLLSASEKLCKTRRSTKKSQPECQ</original>
    <variation>L</variation>
    <location>
        <begin position="311"/>
        <end position="728"/>
    </location>
</feature>
<evidence type="ECO:0000250" key="1">
    <source>
        <dbReference type="UniProtKB" id="P22888"/>
    </source>
</evidence>
<evidence type="ECO:0000255" key="2"/>
<evidence type="ECO:0000255" key="3">
    <source>
        <dbReference type="PROSITE-ProRule" id="PRU00521"/>
    </source>
</evidence>
<evidence type="ECO:0000269" key="4">
    <source>
    </source>
</evidence>
<evidence type="ECO:0000269" key="5">
    <source>
    </source>
</evidence>
<evidence type="ECO:0000303" key="6">
    <source>
    </source>
</evidence>
<evidence type="ECO:0000303" key="7">
    <source>
    </source>
</evidence>
<evidence type="ECO:0000305" key="8"/>
<evidence type="ECO:0000305" key="9">
    <source>
    </source>
</evidence>
<proteinExistence type="evidence at transcript level"/>
<organism>
    <name type="scientific">Gallus gallus</name>
    <name type="common">Chicken</name>
    <dbReference type="NCBI Taxonomy" id="9031"/>
    <lineage>
        <taxon>Eukaryota</taxon>
        <taxon>Metazoa</taxon>
        <taxon>Chordata</taxon>
        <taxon>Craniata</taxon>
        <taxon>Vertebrata</taxon>
        <taxon>Euteleostomi</taxon>
        <taxon>Archelosauria</taxon>
        <taxon>Archosauria</taxon>
        <taxon>Dinosauria</taxon>
        <taxon>Saurischia</taxon>
        <taxon>Theropoda</taxon>
        <taxon>Coelurosauria</taxon>
        <taxon>Aves</taxon>
        <taxon>Neognathae</taxon>
        <taxon>Galloanserae</taxon>
        <taxon>Galliformes</taxon>
        <taxon>Phasianidae</taxon>
        <taxon>Phasianinae</taxon>
        <taxon>Gallus</taxon>
    </lineage>
</organism>
<accession>Q90674</accession>
<accession>F1NGD6</accession>
<accession>Q76N37</accession>